<feature type="chain" id="PRO_0000175211" description="Coproporphyrin III ferrochelatase">
    <location>
        <begin position="1"/>
        <end position="319"/>
    </location>
</feature>
<feature type="binding site" evidence="1">
    <location>
        <position position="193"/>
    </location>
    <ligand>
        <name>Fe(2+)</name>
        <dbReference type="ChEBI" id="CHEBI:29033"/>
    </ligand>
</feature>
<feature type="binding site" evidence="1">
    <location>
        <position position="274"/>
    </location>
    <ligand>
        <name>Fe(2+)</name>
        <dbReference type="ChEBI" id="CHEBI:29033"/>
    </ligand>
</feature>
<comment type="function">
    <text evidence="1">Involved in coproporphyrin-dependent heme b biosynthesis. Catalyzes the insertion of ferrous iron into coproporphyrin III to form Fe-coproporphyrin III.</text>
</comment>
<comment type="catalytic activity">
    <reaction evidence="1">
        <text>Fe-coproporphyrin III + 2 H(+) = coproporphyrin III + Fe(2+)</text>
        <dbReference type="Rhea" id="RHEA:49572"/>
        <dbReference type="ChEBI" id="CHEBI:15378"/>
        <dbReference type="ChEBI" id="CHEBI:29033"/>
        <dbReference type="ChEBI" id="CHEBI:68438"/>
        <dbReference type="ChEBI" id="CHEBI:131725"/>
        <dbReference type="EC" id="4.99.1.9"/>
    </reaction>
    <physiologicalReaction direction="right-to-left" evidence="1">
        <dbReference type="Rhea" id="RHEA:49574"/>
    </physiologicalReaction>
</comment>
<comment type="pathway">
    <text evidence="1">Porphyrin-containing compound metabolism; protoheme biosynthesis.</text>
</comment>
<comment type="subcellular location">
    <subcellularLocation>
        <location evidence="1">Cytoplasm</location>
    </subcellularLocation>
</comment>
<comment type="similarity">
    <text evidence="1">Belongs to the ferrochelatase family.</text>
</comment>
<name>CPFC_STRMU</name>
<sequence>MSQQKIGVLLVNLGTPEHPTAPAIRKFLKPFLADSRVIDYPKFLWKPILYSFILPFRPRKVKPLYQHVWTNEGSPLYANAIGQEKALQAHFDQSEHGVLVRATMAYSKPSISDVVDEFLKEKVAKMIVLPLFPQYSSTTTAAIFDAFAQSLKKKKDIPPFDFIHHYYERPSYIQALAQTIHLQENEHLLFSFHGIPQRYVIEGDYYTEHCQQTAQLIAVAAGLSEEQWQVSYQSRFGPEEWTRPYTDETLIQLPKQGKKKLAVICPGFAADCLETLEEIDITNRKHFMAAGGQAYRYIPALNASPAHIQLLAELISERL</sequence>
<dbReference type="EC" id="4.99.1.9" evidence="1"/>
<dbReference type="EMBL" id="AE014133">
    <property type="protein sequence ID" value="AAN59660.1"/>
    <property type="molecule type" value="Genomic_DNA"/>
</dbReference>
<dbReference type="RefSeq" id="NP_722354.1">
    <property type="nucleotide sequence ID" value="NC_004350.2"/>
</dbReference>
<dbReference type="SMR" id="Q8CWW4"/>
<dbReference type="STRING" id="210007.SMU_2063"/>
<dbReference type="DNASU" id="1029238"/>
<dbReference type="KEGG" id="smu:SMU_2063"/>
<dbReference type="PATRIC" id="fig|210007.7.peg.1836"/>
<dbReference type="eggNOG" id="COG0276">
    <property type="taxonomic scope" value="Bacteria"/>
</dbReference>
<dbReference type="HOGENOM" id="CLU_018884_0_0_9"/>
<dbReference type="OrthoDB" id="9809741at2"/>
<dbReference type="PhylomeDB" id="Q8CWW4"/>
<dbReference type="UniPathway" id="UPA00252"/>
<dbReference type="Proteomes" id="UP000002512">
    <property type="component" value="Chromosome"/>
</dbReference>
<dbReference type="GO" id="GO:0005737">
    <property type="term" value="C:cytoplasm"/>
    <property type="evidence" value="ECO:0007669"/>
    <property type="project" value="UniProtKB-SubCell"/>
</dbReference>
<dbReference type="GO" id="GO:0004325">
    <property type="term" value="F:ferrochelatase activity"/>
    <property type="evidence" value="ECO:0007669"/>
    <property type="project" value="UniProtKB-UniRule"/>
</dbReference>
<dbReference type="GO" id="GO:0046872">
    <property type="term" value="F:metal ion binding"/>
    <property type="evidence" value="ECO:0007669"/>
    <property type="project" value="UniProtKB-KW"/>
</dbReference>
<dbReference type="GO" id="GO:0006783">
    <property type="term" value="P:heme biosynthetic process"/>
    <property type="evidence" value="ECO:0007669"/>
    <property type="project" value="UniProtKB-UniRule"/>
</dbReference>
<dbReference type="CDD" id="cd00419">
    <property type="entry name" value="Ferrochelatase_C"/>
    <property type="match status" value="1"/>
</dbReference>
<dbReference type="CDD" id="cd03411">
    <property type="entry name" value="Ferrochelatase_N"/>
    <property type="match status" value="1"/>
</dbReference>
<dbReference type="FunFam" id="3.40.50.1400:FF:000002">
    <property type="entry name" value="Ferrochelatase"/>
    <property type="match status" value="1"/>
</dbReference>
<dbReference type="Gene3D" id="3.40.50.1400">
    <property type="match status" value="2"/>
</dbReference>
<dbReference type="HAMAP" id="MF_00323">
    <property type="entry name" value="Ferrochelatase"/>
    <property type="match status" value="1"/>
</dbReference>
<dbReference type="InterPro" id="IPR001015">
    <property type="entry name" value="Ferrochelatase"/>
</dbReference>
<dbReference type="InterPro" id="IPR019772">
    <property type="entry name" value="Ferrochelatase_AS"/>
</dbReference>
<dbReference type="InterPro" id="IPR033644">
    <property type="entry name" value="Ferrochelatase_C"/>
</dbReference>
<dbReference type="InterPro" id="IPR033659">
    <property type="entry name" value="Ferrochelatase_N"/>
</dbReference>
<dbReference type="NCBIfam" id="TIGR00109">
    <property type="entry name" value="hemH"/>
    <property type="match status" value="1"/>
</dbReference>
<dbReference type="PANTHER" id="PTHR11108">
    <property type="entry name" value="FERROCHELATASE"/>
    <property type="match status" value="1"/>
</dbReference>
<dbReference type="PANTHER" id="PTHR11108:SF1">
    <property type="entry name" value="FERROCHELATASE, MITOCHONDRIAL"/>
    <property type="match status" value="1"/>
</dbReference>
<dbReference type="Pfam" id="PF00762">
    <property type="entry name" value="Ferrochelatase"/>
    <property type="match status" value="1"/>
</dbReference>
<dbReference type="SUPFAM" id="SSF53800">
    <property type="entry name" value="Chelatase"/>
    <property type="match status" value="1"/>
</dbReference>
<dbReference type="PROSITE" id="PS00534">
    <property type="entry name" value="FERROCHELATASE"/>
    <property type="match status" value="1"/>
</dbReference>
<accession>Q8CWW4</accession>
<protein>
    <recommendedName>
        <fullName evidence="1">Coproporphyrin III ferrochelatase</fullName>
        <ecNumber evidence="1">4.99.1.9</ecNumber>
    </recommendedName>
</protein>
<evidence type="ECO:0000255" key="1">
    <source>
        <dbReference type="HAMAP-Rule" id="MF_00323"/>
    </source>
</evidence>
<proteinExistence type="inferred from homology"/>
<organism>
    <name type="scientific">Streptococcus mutans serotype c (strain ATCC 700610 / UA159)</name>
    <dbReference type="NCBI Taxonomy" id="210007"/>
    <lineage>
        <taxon>Bacteria</taxon>
        <taxon>Bacillati</taxon>
        <taxon>Bacillota</taxon>
        <taxon>Bacilli</taxon>
        <taxon>Lactobacillales</taxon>
        <taxon>Streptococcaceae</taxon>
        <taxon>Streptococcus</taxon>
    </lineage>
</organism>
<keyword id="KW-0963">Cytoplasm</keyword>
<keyword id="KW-0350">Heme biosynthesis</keyword>
<keyword id="KW-0408">Iron</keyword>
<keyword id="KW-0456">Lyase</keyword>
<keyword id="KW-0479">Metal-binding</keyword>
<keyword id="KW-0627">Porphyrin biosynthesis</keyword>
<keyword id="KW-1185">Reference proteome</keyword>
<gene>
    <name evidence="1" type="primary">cpfC</name>
    <name type="synonym">hemZ</name>
    <name type="ordered locus">SMU_2063</name>
</gene>
<reference key="1">
    <citation type="journal article" date="2002" name="Proc. Natl. Acad. Sci. U.S.A.">
        <title>Genome sequence of Streptococcus mutans UA159, a cariogenic dental pathogen.</title>
        <authorList>
            <person name="Ajdic D.J."/>
            <person name="McShan W.M."/>
            <person name="McLaughlin R.E."/>
            <person name="Savic G."/>
            <person name="Chang J."/>
            <person name="Carson M.B."/>
            <person name="Primeaux C."/>
            <person name="Tian R."/>
            <person name="Kenton S."/>
            <person name="Jia H.G."/>
            <person name="Lin S.P."/>
            <person name="Qian Y."/>
            <person name="Li S."/>
            <person name="Zhu H."/>
            <person name="Najar F.Z."/>
            <person name="Lai H."/>
            <person name="White J."/>
            <person name="Roe B.A."/>
            <person name="Ferretti J.J."/>
        </authorList>
    </citation>
    <scope>NUCLEOTIDE SEQUENCE [LARGE SCALE GENOMIC DNA]</scope>
    <source>
        <strain>ATCC 700610 / UA159</strain>
    </source>
</reference>